<name>RLBP1_MOUSE</name>
<gene>
    <name evidence="6" type="primary">Rlbp1</name>
    <name type="synonym">Cralbp</name>
</gene>
<keyword id="KW-0007">Acetylation</keyword>
<keyword id="KW-0963">Cytoplasm</keyword>
<keyword id="KW-1185">Reference proteome</keyword>
<keyword id="KW-0683">Retinol-binding</keyword>
<keyword id="KW-0716">Sensory transduction</keyword>
<keyword id="KW-0813">Transport</keyword>
<keyword id="KW-0844">Vision</keyword>
<proteinExistence type="evidence at protein level"/>
<dbReference type="EMBL" id="AF084642">
    <property type="protein sequence ID" value="AAC99427.1"/>
    <property type="molecule type" value="Genomic_DNA"/>
</dbReference>
<dbReference type="EMBL" id="AF084638">
    <property type="protein sequence ID" value="AAC99427.1"/>
    <property type="status" value="JOINED"/>
    <property type="molecule type" value="Genomic_DNA"/>
</dbReference>
<dbReference type="EMBL" id="AF084639">
    <property type="protein sequence ID" value="AAC99427.1"/>
    <property type="status" value="JOINED"/>
    <property type="molecule type" value="Genomic_DNA"/>
</dbReference>
<dbReference type="EMBL" id="AF084640">
    <property type="protein sequence ID" value="AAC99427.1"/>
    <property type="status" value="JOINED"/>
    <property type="molecule type" value="Genomic_DNA"/>
</dbReference>
<dbReference type="EMBL" id="AF084641">
    <property type="protein sequence ID" value="AAC99427.1"/>
    <property type="status" value="JOINED"/>
    <property type="molecule type" value="Genomic_DNA"/>
</dbReference>
<dbReference type="EMBL" id="BC016268">
    <property type="protein sequence ID" value="AAH16268.1"/>
    <property type="molecule type" value="mRNA"/>
</dbReference>
<dbReference type="CCDS" id="CCDS39990.1"/>
<dbReference type="RefSeq" id="NP_001166954.1">
    <property type="nucleotide sequence ID" value="NM_001173483.1"/>
</dbReference>
<dbReference type="RefSeq" id="NP_001344379.1">
    <property type="nucleotide sequence ID" value="NM_001357450.1"/>
</dbReference>
<dbReference type="RefSeq" id="NP_065624.1">
    <property type="nucleotide sequence ID" value="NM_020599.2"/>
</dbReference>
<dbReference type="RefSeq" id="XP_006540780.1">
    <property type="nucleotide sequence ID" value="XM_006540717.3"/>
</dbReference>
<dbReference type="RefSeq" id="XP_006540781.1">
    <property type="nucleotide sequence ID" value="XM_006540718.1"/>
</dbReference>
<dbReference type="RefSeq" id="XP_030098104.1">
    <property type="nucleotide sequence ID" value="XM_030242244.1"/>
</dbReference>
<dbReference type="RefSeq" id="XP_036008702.1">
    <property type="nucleotide sequence ID" value="XM_036152809.1"/>
</dbReference>
<dbReference type="SMR" id="Q9Z275"/>
<dbReference type="BioGRID" id="202898">
    <property type="interactions" value="4"/>
</dbReference>
<dbReference type="FunCoup" id="Q9Z275">
    <property type="interactions" value="59"/>
</dbReference>
<dbReference type="STRING" id="10090.ENSMUSP00000137143"/>
<dbReference type="iPTMnet" id="Q9Z275"/>
<dbReference type="PhosphoSitePlus" id="Q9Z275"/>
<dbReference type="PaxDb" id="10090-ENSMUSP00000054545"/>
<dbReference type="ProteomicsDB" id="299827"/>
<dbReference type="Antibodypedia" id="15709">
    <property type="antibodies" value="282 antibodies from 28 providers"/>
</dbReference>
<dbReference type="DNASU" id="19771"/>
<dbReference type="Ensembl" id="ENSMUST00000053718.15">
    <property type="protein sequence ID" value="ENSMUSP00000054545.9"/>
    <property type="gene ID" value="ENSMUSG00000039194.17"/>
</dbReference>
<dbReference type="Ensembl" id="ENSMUST00000179243.3">
    <property type="protein sequence ID" value="ENSMUSP00000137143.2"/>
    <property type="gene ID" value="ENSMUSG00000039194.17"/>
</dbReference>
<dbReference type="GeneID" id="19771"/>
<dbReference type="KEGG" id="mmu:19771"/>
<dbReference type="UCSC" id="uc009hye.2">
    <property type="organism name" value="mouse"/>
</dbReference>
<dbReference type="AGR" id="MGI:97930"/>
<dbReference type="CTD" id="6017"/>
<dbReference type="MGI" id="MGI:97930">
    <property type="gene designation" value="Rlbp1"/>
</dbReference>
<dbReference type="VEuPathDB" id="HostDB:ENSMUSG00000039194"/>
<dbReference type="eggNOG" id="KOG1471">
    <property type="taxonomic scope" value="Eukaryota"/>
</dbReference>
<dbReference type="GeneTree" id="ENSGT00940000160026"/>
<dbReference type="HOGENOM" id="CLU_046597_4_0_1"/>
<dbReference type="InParanoid" id="Q9Z275"/>
<dbReference type="OMA" id="IETCTLI"/>
<dbReference type="OrthoDB" id="75724at2759"/>
<dbReference type="PhylomeDB" id="Q9Z275"/>
<dbReference type="Reactome" id="R-MMU-2187335">
    <property type="pathway name" value="The retinoid cycle in cones (daylight vision)"/>
</dbReference>
<dbReference type="Reactome" id="R-MMU-2453902">
    <property type="pathway name" value="The canonical retinoid cycle in rods (twilight vision)"/>
</dbReference>
<dbReference type="BioGRID-ORCS" id="19771">
    <property type="hits" value="0 hits in 80 CRISPR screens"/>
</dbReference>
<dbReference type="PRO" id="PR:Q9Z275"/>
<dbReference type="Proteomes" id="UP000000589">
    <property type="component" value="Chromosome 7"/>
</dbReference>
<dbReference type="RNAct" id="Q9Z275">
    <property type="molecule type" value="protein"/>
</dbReference>
<dbReference type="Bgee" id="ENSMUSG00000039194">
    <property type="expression patterns" value="Expressed in pigmented layer of retina and 140 other cell types or tissues"/>
</dbReference>
<dbReference type="ExpressionAtlas" id="Q9Z275">
    <property type="expression patterns" value="baseline and differential"/>
</dbReference>
<dbReference type="GO" id="GO:0044297">
    <property type="term" value="C:cell body"/>
    <property type="evidence" value="ECO:0007669"/>
    <property type="project" value="Ensembl"/>
</dbReference>
<dbReference type="GO" id="GO:0005813">
    <property type="term" value="C:centrosome"/>
    <property type="evidence" value="ECO:0007669"/>
    <property type="project" value="Ensembl"/>
</dbReference>
<dbReference type="GO" id="GO:0005829">
    <property type="term" value="C:cytosol"/>
    <property type="evidence" value="ECO:0007669"/>
    <property type="project" value="Ensembl"/>
</dbReference>
<dbReference type="GO" id="GO:0005654">
    <property type="term" value="C:nucleoplasm"/>
    <property type="evidence" value="ECO:0007669"/>
    <property type="project" value="Ensembl"/>
</dbReference>
<dbReference type="GO" id="GO:0005502">
    <property type="term" value="F:11-cis retinal binding"/>
    <property type="evidence" value="ECO:0000314"/>
    <property type="project" value="MGI"/>
</dbReference>
<dbReference type="GO" id="GO:0019841">
    <property type="term" value="F:retinol binding"/>
    <property type="evidence" value="ECO:0007669"/>
    <property type="project" value="UniProtKB-KW"/>
</dbReference>
<dbReference type="GO" id="GO:0007601">
    <property type="term" value="P:visual perception"/>
    <property type="evidence" value="ECO:0007669"/>
    <property type="project" value="UniProtKB-KW"/>
</dbReference>
<dbReference type="CDD" id="cd00170">
    <property type="entry name" value="SEC14"/>
    <property type="match status" value="1"/>
</dbReference>
<dbReference type="FunFam" id="1.10.8.20:FF:000004">
    <property type="entry name" value="Retinaldehyde binding protein 1"/>
    <property type="match status" value="1"/>
</dbReference>
<dbReference type="FunFam" id="3.40.525.10:FF:000015">
    <property type="entry name" value="retinaldehyde-binding protein 1"/>
    <property type="match status" value="1"/>
</dbReference>
<dbReference type="Gene3D" id="3.40.525.10">
    <property type="entry name" value="CRAL-TRIO lipid binding domain"/>
    <property type="match status" value="1"/>
</dbReference>
<dbReference type="Gene3D" id="1.10.8.20">
    <property type="entry name" value="N-terminal domain of phosphatidylinositol transfer protein sec14p"/>
    <property type="match status" value="1"/>
</dbReference>
<dbReference type="InterPro" id="IPR001251">
    <property type="entry name" value="CRAL-TRIO_dom"/>
</dbReference>
<dbReference type="InterPro" id="IPR036865">
    <property type="entry name" value="CRAL-TRIO_dom_sf"/>
</dbReference>
<dbReference type="InterPro" id="IPR011074">
    <property type="entry name" value="CRAL/TRIO_N_dom"/>
</dbReference>
<dbReference type="InterPro" id="IPR036273">
    <property type="entry name" value="CRAL/TRIO_N_dom_sf"/>
</dbReference>
<dbReference type="PANTHER" id="PTHR10174">
    <property type="entry name" value="ALPHA-TOCOPHEROL TRANSFER PROTEIN-RELATED"/>
    <property type="match status" value="1"/>
</dbReference>
<dbReference type="PANTHER" id="PTHR10174:SF200">
    <property type="entry name" value="RETINALDEHYDE-BINDING PROTEIN 1"/>
    <property type="match status" value="1"/>
</dbReference>
<dbReference type="Pfam" id="PF00650">
    <property type="entry name" value="CRAL_TRIO"/>
    <property type="match status" value="1"/>
</dbReference>
<dbReference type="Pfam" id="PF03765">
    <property type="entry name" value="CRAL_TRIO_N"/>
    <property type="match status" value="1"/>
</dbReference>
<dbReference type="PRINTS" id="PR00180">
    <property type="entry name" value="CRETINALDHBP"/>
</dbReference>
<dbReference type="SMART" id="SM01100">
    <property type="entry name" value="CRAL_TRIO_N"/>
    <property type="match status" value="1"/>
</dbReference>
<dbReference type="SMART" id="SM00516">
    <property type="entry name" value="SEC14"/>
    <property type="match status" value="1"/>
</dbReference>
<dbReference type="SUPFAM" id="SSF52087">
    <property type="entry name" value="CRAL/TRIO domain"/>
    <property type="match status" value="1"/>
</dbReference>
<dbReference type="SUPFAM" id="SSF46938">
    <property type="entry name" value="CRAL/TRIO N-terminal domain"/>
    <property type="match status" value="1"/>
</dbReference>
<dbReference type="PROSITE" id="PS50191">
    <property type="entry name" value="CRAL_TRIO"/>
    <property type="match status" value="1"/>
</dbReference>
<comment type="function">
    <text>Soluble retinoid carrier essential the proper function of both rod and cone photoreceptors. Participates in the regeneration of active 11-cis-retinol and 11-cis-retinaldehyde, from the inactive 11-trans products of the rhodopsin photocycle and in the de novo synthesis of these retinoids from 11-trans metabolic precursors. The cycling of retinoids between photoreceptor and adjacent pigment epithelium cells is known as the 'visual cycle'.</text>
</comment>
<comment type="subunit">
    <text evidence="2">Interacts with DEGS1; the interaction increases synthesis of chromophore-precursors by DEGS1.</text>
</comment>
<comment type="subcellular location">
    <subcellularLocation>
        <location>Cytoplasm</location>
    </subcellularLocation>
</comment>
<comment type="tissue specificity">
    <text evidence="5">Retina and pineal gland. Expressed in Mueller cells (at protein level) (PubMed:23143414).</text>
</comment>
<sequence length="317" mass="36408">MSDGVGTFRMVPEEEQELRAQLEQLTTKDHGPVFGPCSQLPRHTLQKAKDELNEKEETREEAVRELQELVQAQAASGEELALAVAERVQARDSAFLLRFIRARKFDVGRAYELLKGYVNFRLQYPELFDSLSMEALRCTIEAGYPGVLSSRDKYGRVVMLFNIENWHCEEVTFDEILQAYCFILEKLLENEETQINGFCIVENFKGFTMQQAAGLRPSDLKKMVDMLQDSFPARFKAIHFIHQPWYFTTTYNVVKPFLKNKLLQRVFVHGDDLDGFFQEIDENILPADFGGTLPKYDGKVVAEQLFGPRAEVENTAL</sequence>
<feature type="initiator methionine" description="Removed" evidence="3">
    <location>
        <position position="1"/>
    </location>
</feature>
<feature type="chain" id="PRO_0000079331" description="Retinaldehyde-binding protein 1">
    <location>
        <begin position="2"/>
        <end position="317"/>
    </location>
</feature>
<feature type="domain" description="CRAL-TRIO" evidence="4">
    <location>
        <begin position="136"/>
        <end position="297"/>
    </location>
</feature>
<feature type="binding site" evidence="1">
    <location>
        <position position="180"/>
    </location>
    <ligand>
        <name>11-cis-retinal</name>
        <dbReference type="ChEBI" id="CHEBI:16066"/>
    </ligand>
</feature>
<feature type="binding site" evidence="1">
    <location>
        <position position="202"/>
    </location>
    <ligand>
        <name>11-cis-retinal</name>
        <dbReference type="ChEBI" id="CHEBI:16066"/>
    </ligand>
</feature>
<feature type="modified residue" description="N-acetylserine" evidence="3">
    <location>
        <position position="2"/>
    </location>
</feature>
<evidence type="ECO:0000250" key="1"/>
<evidence type="ECO:0000250" key="2">
    <source>
        <dbReference type="UniProtKB" id="E1C1U1"/>
    </source>
</evidence>
<evidence type="ECO:0000250" key="3">
    <source>
        <dbReference type="UniProtKB" id="P10123"/>
    </source>
</evidence>
<evidence type="ECO:0000255" key="4">
    <source>
        <dbReference type="PROSITE-ProRule" id="PRU00056"/>
    </source>
</evidence>
<evidence type="ECO:0000269" key="5">
    <source>
    </source>
</evidence>
<evidence type="ECO:0000312" key="6">
    <source>
        <dbReference type="MGI" id="MGI:97930"/>
    </source>
</evidence>
<protein>
    <recommendedName>
        <fullName>Retinaldehyde-binding protein 1</fullName>
    </recommendedName>
    <alternativeName>
        <fullName>Cellular retinaldehyde-binding protein</fullName>
    </alternativeName>
</protein>
<reference key="1">
    <citation type="journal article" date="1998" name="Mol. Vis.">
        <title>Molecular characterization of the mouse gene encoding cellular retinaldehyde-binding protein.</title>
        <authorList>
            <person name="Kennedy B.N."/>
            <person name="Huang J."/>
            <person name="Saari J.C."/>
            <person name="Crabb J.W."/>
        </authorList>
    </citation>
    <scope>NUCLEOTIDE SEQUENCE [GENOMIC DNA]</scope>
    <source>
        <strain>129/SvJ</strain>
    </source>
</reference>
<reference key="2">
    <citation type="journal article" date="2004" name="Genome Res.">
        <title>The status, quality, and expansion of the NIH full-length cDNA project: the Mammalian Gene Collection (MGC).</title>
        <authorList>
            <consortium name="The MGC Project Team"/>
        </authorList>
    </citation>
    <scope>NUCLEOTIDE SEQUENCE [LARGE SCALE MRNA]</scope>
    <source>
        <tissue>Eye</tissue>
    </source>
</reference>
<reference key="3">
    <citation type="journal article" date="2010" name="Cell">
        <title>A tissue-specific atlas of mouse protein phosphorylation and expression.</title>
        <authorList>
            <person name="Huttlin E.L."/>
            <person name="Jedrychowski M.P."/>
            <person name="Elias J.E."/>
            <person name="Goswami T."/>
            <person name="Rad R."/>
            <person name="Beausoleil S.A."/>
            <person name="Villen J."/>
            <person name="Haas W."/>
            <person name="Sowa M.E."/>
            <person name="Gygi S.P."/>
        </authorList>
    </citation>
    <scope>IDENTIFICATION BY MASS SPECTROMETRY [LARGE SCALE ANALYSIS]</scope>
    <source>
        <tissue>Brain</tissue>
    </source>
</reference>
<reference key="4">
    <citation type="journal article" date="2013" name="Nat. Chem. Biol.">
        <title>Identification of DES1 as a vitamin A isomerase in Mueller glial cells of the retina.</title>
        <authorList>
            <person name="Kaylor J.J."/>
            <person name="Yuan Q."/>
            <person name="Cook J."/>
            <person name="Sarfare S."/>
            <person name="Makshanoff J."/>
            <person name="Miu A."/>
            <person name="Kim A."/>
            <person name="Kim P."/>
            <person name="Habib S."/>
            <person name="Roybal C.N."/>
            <person name="Xu T."/>
            <person name="Nusinowitz S."/>
            <person name="Travis G.H."/>
        </authorList>
    </citation>
    <scope>TISSUE SPECIFICITY</scope>
</reference>
<organism>
    <name type="scientific">Mus musculus</name>
    <name type="common">Mouse</name>
    <dbReference type="NCBI Taxonomy" id="10090"/>
    <lineage>
        <taxon>Eukaryota</taxon>
        <taxon>Metazoa</taxon>
        <taxon>Chordata</taxon>
        <taxon>Craniata</taxon>
        <taxon>Vertebrata</taxon>
        <taxon>Euteleostomi</taxon>
        <taxon>Mammalia</taxon>
        <taxon>Eutheria</taxon>
        <taxon>Euarchontoglires</taxon>
        <taxon>Glires</taxon>
        <taxon>Rodentia</taxon>
        <taxon>Myomorpha</taxon>
        <taxon>Muroidea</taxon>
        <taxon>Muridae</taxon>
        <taxon>Murinae</taxon>
        <taxon>Mus</taxon>
        <taxon>Mus</taxon>
    </lineage>
</organism>
<accession>Q9Z275</accession>